<sequence length="210" mass="23439">MPPYTIVYFPVRGRCEATRMLLADQGQSWKEEVVTIDVWLQGSLKSTCLYGQLPKFEDGDLTLYQSNAILRHLGRSLGLYGKDQKEAALVDMVNDGVEDLRCKYGTLIYTNYENGKDDYVKALPGHLKPFETLLSQNQGGKAFIVGNQISFADYNLLDLLLVHQVLAPGCLDNFPLLSAYVARLSARPKIKAFLSSPDHLNRPINGNGKQ</sequence>
<keyword id="KW-0007">Acetylation</keyword>
<keyword id="KW-0963">Cytoplasm</keyword>
<keyword id="KW-0903">Direct protein sequencing</keyword>
<keyword id="KW-0443">Lipid metabolism</keyword>
<keyword id="KW-0496">Mitochondrion</keyword>
<keyword id="KW-0539">Nucleus</keyword>
<keyword id="KW-0597">Phosphoprotein</keyword>
<keyword id="KW-1185">Reference proteome</keyword>
<keyword id="KW-0808">Transferase</keyword>
<dbReference type="EC" id="2.5.1.18" evidence="2"/>
<dbReference type="EMBL" id="X02904">
    <property type="protein sequence ID" value="CAA26664.1"/>
    <property type="molecule type" value="mRNA"/>
</dbReference>
<dbReference type="EMBL" id="L29427">
    <property type="protein sequence ID" value="AAB59718.1"/>
    <property type="molecule type" value="Genomic_DNA"/>
</dbReference>
<dbReference type="EMBL" id="BC058439">
    <property type="protein sequence ID" value="AAH58439.1"/>
    <property type="molecule type" value="mRNA"/>
</dbReference>
<dbReference type="EMBL" id="BC058440">
    <property type="protein sequence ID" value="AAH58440.1"/>
    <property type="molecule type" value="mRNA"/>
</dbReference>
<dbReference type="PIR" id="A26546">
    <property type="entry name" value="XURTGP"/>
</dbReference>
<dbReference type="PIR" id="S59902">
    <property type="entry name" value="S59902"/>
</dbReference>
<dbReference type="RefSeq" id="NP_036709.1">
    <property type="nucleotide sequence ID" value="NM_012577.2"/>
</dbReference>
<dbReference type="RefSeq" id="XP_063136797.1">
    <property type="nucleotide sequence ID" value="XM_063280727.1"/>
</dbReference>
<dbReference type="SMR" id="P04906"/>
<dbReference type="BioGRID" id="246591">
    <property type="interactions" value="1"/>
</dbReference>
<dbReference type="FunCoup" id="P04906">
    <property type="interactions" value="814"/>
</dbReference>
<dbReference type="IntAct" id="P04906">
    <property type="interactions" value="2"/>
</dbReference>
<dbReference type="STRING" id="10116.ENSRNOP00000024601"/>
<dbReference type="GlyGen" id="P04906">
    <property type="glycosylation" value="1 site, 1 O-linked glycan (1 site)"/>
</dbReference>
<dbReference type="iPTMnet" id="P04906"/>
<dbReference type="PhosphoSitePlus" id="P04906"/>
<dbReference type="SwissPalm" id="P04906"/>
<dbReference type="jPOST" id="P04906"/>
<dbReference type="PaxDb" id="10116-ENSRNOP00000024601"/>
<dbReference type="Ensembl" id="ENSRNOT00000024601.5">
    <property type="protein sequence ID" value="ENSRNOP00000024601.4"/>
    <property type="gene ID" value="ENSRNOG00000018237.5"/>
</dbReference>
<dbReference type="GeneID" id="24426"/>
<dbReference type="KEGG" id="rno:24426"/>
<dbReference type="UCSC" id="RGD:2758">
    <property type="organism name" value="rat"/>
</dbReference>
<dbReference type="AGR" id="RGD:2758"/>
<dbReference type="CTD" id="2950"/>
<dbReference type="RGD" id="2758">
    <property type="gene designation" value="Gstp1"/>
</dbReference>
<dbReference type="eggNOG" id="KOG1695">
    <property type="taxonomic scope" value="Eukaryota"/>
</dbReference>
<dbReference type="GeneTree" id="ENSGT00940000162460"/>
<dbReference type="HOGENOM" id="CLU_039475_2_1_1"/>
<dbReference type="InParanoid" id="P04906"/>
<dbReference type="OMA" id="KKSCVFG"/>
<dbReference type="OrthoDB" id="26838at9989"/>
<dbReference type="PhylomeDB" id="P04906"/>
<dbReference type="TreeFam" id="TF105321"/>
<dbReference type="Reactome" id="R-RNO-156590">
    <property type="pathway name" value="Glutathione conjugation"/>
</dbReference>
<dbReference type="Reactome" id="R-RNO-3299685">
    <property type="pathway name" value="Detoxification of Reactive Oxygen Species"/>
</dbReference>
<dbReference type="Reactome" id="R-RNO-6798695">
    <property type="pathway name" value="Neutrophil degranulation"/>
</dbReference>
<dbReference type="Reactome" id="R-RNO-9753281">
    <property type="pathway name" value="Paracetamol ADME"/>
</dbReference>
<dbReference type="PRO" id="PR:P04906"/>
<dbReference type="Proteomes" id="UP000002494">
    <property type="component" value="Chromosome 1"/>
</dbReference>
<dbReference type="Bgee" id="ENSRNOG00000018237">
    <property type="expression patterns" value="Expressed in kidney and 20 other cell types or tissues"/>
</dbReference>
<dbReference type="ExpressionAtlas" id="P04906">
    <property type="expression patterns" value="baseline and differential"/>
</dbReference>
<dbReference type="GO" id="GO:0005829">
    <property type="term" value="C:cytosol"/>
    <property type="evidence" value="ECO:0000266"/>
    <property type="project" value="RGD"/>
</dbReference>
<dbReference type="GO" id="GO:0005739">
    <property type="term" value="C:mitochondrion"/>
    <property type="evidence" value="ECO:0007669"/>
    <property type="project" value="UniProtKB-SubCell"/>
</dbReference>
<dbReference type="GO" id="GO:0005634">
    <property type="term" value="C:nucleus"/>
    <property type="evidence" value="ECO:0007669"/>
    <property type="project" value="UniProtKB-SubCell"/>
</dbReference>
<dbReference type="GO" id="GO:0032991">
    <property type="term" value="C:protein-containing complex"/>
    <property type="evidence" value="ECO:0000250"/>
    <property type="project" value="BHF-UCL"/>
</dbReference>
<dbReference type="GO" id="GO:0097057">
    <property type="term" value="C:TRAF2-GSTP1 complex"/>
    <property type="evidence" value="ECO:0000266"/>
    <property type="project" value="RGD"/>
</dbReference>
<dbReference type="GO" id="GO:0035731">
    <property type="term" value="F:dinitrosyl-iron complex binding"/>
    <property type="evidence" value="ECO:0000266"/>
    <property type="project" value="RGD"/>
</dbReference>
<dbReference type="GO" id="GO:0005504">
    <property type="term" value="F:fatty acid binding"/>
    <property type="evidence" value="ECO:0000266"/>
    <property type="project" value="RGD"/>
</dbReference>
<dbReference type="GO" id="GO:0004602">
    <property type="term" value="F:glutathione peroxidase activity"/>
    <property type="evidence" value="ECO:0000266"/>
    <property type="project" value="RGD"/>
</dbReference>
<dbReference type="GO" id="GO:0004364">
    <property type="term" value="F:glutathione transferase activity"/>
    <property type="evidence" value="ECO:0000266"/>
    <property type="project" value="RGD"/>
</dbReference>
<dbReference type="GO" id="GO:0008432">
    <property type="term" value="F:JUN kinase binding"/>
    <property type="evidence" value="ECO:0000250"/>
    <property type="project" value="BHF-UCL"/>
</dbReference>
<dbReference type="GO" id="GO:0019207">
    <property type="term" value="F:kinase regulator activity"/>
    <property type="evidence" value="ECO:0000266"/>
    <property type="project" value="RGD"/>
</dbReference>
<dbReference type="GO" id="GO:0019901">
    <property type="term" value="F:protein kinase binding"/>
    <property type="evidence" value="ECO:0000353"/>
    <property type="project" value="RGD"/>
</dbReference>
<dbReference type="GO" id="GO:0030291">
    <property type="term" value="F:protein serine/threonine kinase inhibitor activity"/>
    <property type="evidence" value="ECO:0000250"/>
    <property type="project" value="BHF-UCL"/>
</dbReference>
<dbReference type="GO" id="GO:0035730">
    <property type="term" value="F:S-nitrosoglutathione binding"/>
    <property type="evidence" value="ECO:0000266"/>
    <property type="project" value="RGD"/>
</dbReference>
<dbReference type="GO" id="GO:0015643">
    <property type="term" value="F:toxic substance binding"/>
    <property type="evidence" value="ECO:0000353"/>
    <property type="project" value="RGD"/>
</dbReference>
<dbReference type="GO" id="GO:0031100">
    <property type="term" value="P:animal organ regeneration"/>
    <property type="evidence" value="ECO:0000270"/>
    <property type="project" value="RGD"/>
</dbReference>
<dbReference type="GO" id="GO:0071460">
    <property type="term" value="P:cellular response to cell-matrix adhesion"/>
    <property type="evidence" value="ECO:0000270"/>
    <property type="project" value="RGD"/>
</dbReference>
<dbReference type="GO" id="GO:0071364">
    <property type="term" value="P:cellular response to epidermal growth factor stimulus"/>
    <property type="evidence" value="ECO:0000270"/>
    <property type="project" value="RGD"/>
</dbReference>
<dbReference type="GO" id="GO:0071385">
    <property type="term" value="P:cellular response to glucocorticoid stimulus"/>
    <property type="evidence" value="ECO:0000270"/>
    <property type="project" value="RGD"/>
</dbReference>
<dbReference type="GO" id="GO:0032869">
    <property type="term" value="P:cellular response to insulin stimulus"/>
    <property type="evidence" value="ECO:0000270"/>
    <property type="project" value="RGD"/>
</dbReference>
<dbReference type="GO" id="GO:0071222">
    <property type="term" value="P:cellular response to lipopolysaccharide"/>
    <property type="evidence" value="ECO:0000250"/>
    <property type="project" value="BHF-UCL"/>
</dbReference>
<dbReference type="GO" id="GO:0035726">
    <property type="term" value="P:common myeloid progenitor cell proliferation"/>
    <property type="evidence" value="ECO:0000250"/>
    <property type="project" value="BHF-UCL"/>
</dbReference>
<dbReference type="GO" id="GO:1901687">
    <property type="term" value="P:glutathione derivative biosynthetic process"/>
    <property type="evidence" value="ECO:0000250"/>
    <property type="project" value="UniProtKB"/>
</dbReference>
<dbReference type="GO" id="GO:0006749">
    <property type="term" value="P:glutathione metabolic process"/>
    <property type="evidence" value="ECO:0000266"/>
    <property type="project" value="RGD"/>
</dbReference>
<dbReference type="GO" id="GO:0051122">
    <property type="term" value="P:hepoxilin biosynthetic process"/>
    <property type="evidence" value="ECO:0000250"/>
    <property type="project" value="UniProtKB"/>
</dbReference>
<dbReference type="GO" id="GO:0006954">
    <property type="term" value="P:inflammatory response"/>
    <property type="evidence" value="ECO:0000250"/>
    <property type="project" value="BHF-UCL"/>
</dbReference>
<dbReference type="GO" id="GO:0043651">
    <property type="term" value="P:linoleic acid metabolic process"/>
    <property type="evidence" value="ECO:0000266"/>
    <property type="project" value="RGD"/>
</dbReference>
<dbReference type="GO" id="GO:0043124">
    <property type="term" value="P:negative regulation of canonical NF-kappaB signal transduction"/>
    <property type="evidence" value="ECO:0000250"/>
    <property type="project" value="BHF-UCL"/>
</dbReference>
<dbReference type="GO" id="GO:0070373">
    <property type="term" value="P:negative regulation of ERK1 and ERK2 cascade"/>
    <property type="evidence" value="ECO:0000250"/>
    <property type="project" value="BHF-UCL"/>
</dbReference>
<dbReference type="GO" id="GO:2001237">
    <property type="term" value="P:negative regulation of extrinsic apoptotic signaling pathway"/>
    <property type="evidence" value="ECO:0000266"/>
    <property type="project" value="RGD"/>
</dbReference>
<dbReference type="GO" id="GO:0048147">
    <property type="term" value="P:negative regulation of fibroblast proliferation"/>
    <property type="evidence" value="ECO:0000250"/>
    <property type="project" value="BHF-UCL"/>
</dbReference>
<dbReference type="GO" id="GO:0032691">
    <property type="term" value="P:negative regulation of interleukin-1 beta production"/>
    <property type="evidence" value="ECO:0000250"/>
    <property type="project" value="BHF-UCL"/>
</dbReference>
<dbReference type="GO" id="GO:0046329">
    <property type="term" value="P:negative regulation of JNK cascade"/>
    <property type="evidence" value="ECO:0007669"/>
    <property type="project" value="Ensembl"/>
</dbReference>
<dbReference type="GO" id="GO:0070664">
    <property type="term" value="P:negative regulation of leukocyte proliferation"/>
    <property type="evidence" value="ECO:0000250"/>
    <property type="project" value="BHF-UCL"/>
</dbReference>
<dbReference type="GO" id="GO:0071638">
    <property type="term" value="P:negative regulation of monocyte chemotactic protein-1 production"/>
    <property type="evidence" value="ECO:0000250"/>
    <property type="project" value="BHF-UCL"/>
</dbReference>
<dbReference type="GO" id="GO:0071672">
    <property type="term" value="P:negative regulation of smooth muscle cell chemotaxis"/>
    <property type="evidence" value="ECO:0000315"/>
    <property type="project" value="RGD"/>
</dbReference>
<dbReference type="GO" id="GO:0032873">
    <property type="term" value="P:negative regulation of stress-activated MAPK cascade"/>
    <property type="evidence" value="ECO:0000250"/>
    <property type="project" value="BHF-UCL"/>
</dbReference>
<dbReference type="GO" id="GO:0032720">
    <property type="term" value="P:negative regulation of tumor necrosis factor production"/>
    <property type="evidence" value="ECO:0000250"/>
    <property type="project" value="BHF-UCL"/>
</dbReference>
<dbReference type="GO" id="GO:1904706">
    <property type="term" value="P:negative regulation of vascular associated smooth muscle cell proliferation"/>
    <property type="evidence" value="ECO:0000315"/>
    <property type="project" value="RGD"/>
</dbReference>
<dbReference type="GO" id="GO:0014003">
    <property type="term" value="P:oligodendrocyte development"/>
    <property type="evidence" value="ECO:0000270"/>
    <property type="project" value="RGD"/>
</dbReference>
<dbReference type="GO" id="GO:0032930">
    <property type="term" value="P:positive regulation of superoxide anion generation"/>
    <property type="evidence" value="ECO:0000250"/>
    <property type="project" value="BHF-UCL"/>
</dbReference>
<dbReference type="GO" id="GO:0006693">
    <property type="term" value="P:prostaglandin metabolic process"/>
    <property type="evidence" value="ECO:0000250"/>
    <property type="project" value="UniProtKB"/>
</dbReference>
<dbReference type="GO" id="GO:0070372">
    <property type="term" value="P:regulation of ERK1 and ERK2 cascade"/>
    <property type="evidence" value="ECO:0000250"/>
    <property type="project" value="BHF-UCL"/>
</dbReference>
<dbReference type="GO" id="GO:0032872">
    <property type="term" value="P:regulation of stress-activated MAPK cascade"/>
    <property type="evidence" value="ECO:0000250"/>
    <property type="project" value="BHF-UCL"/>
</dbReference>
<dbReference type="GO" id="GO:0043200">
    <property type="term" value="P:response to amino acid"/>
    <property type="evidence" value="ECO:0000270"/>
    <property type="project" value="RGD"/>
</dbReference>
<dbReference type="GO" id="GO:0032355">
    <property type="term" value="P:response to estradiol"/>
    <property type="evidence" value="ECO:0000270"/>
    <property type="project" value="RGD"/>
</dbReference>
<dbReference type="GO" id="GO:0045471">
    <property type="term" value="P:response to ethanol"/>
    <property type="evidence" value="ECO:0000270"/>
    <property type="project" value="RGD"/>
</dbReference>
<dbReference type="GO" id="GO:0033591">
    <property type="term" value="P:response to L-ascorbic acid"/>
    <property type="evidence" value="ECO:0000270"/>
    <property type="project" value="RGD"/>
</dbReference>
<dbReference type="GO" id="GO:0031667">
    <property type="term" value="P:response to nutrient levels"/>
    <property type="evidence" value="ECO:0000270"/>
    <property type="project" value="RGD"/>
</dbReference>
<dbReference type="GO" id="GO:0000302">
    <property type="term" value="P:response to reactive oxygen species"/>
    <property type="evidence" value="ECO:0000250"/>
    <property type="project" value="BHF-UCL"/>
</dbReference>
<dbReference type="GO" id="GO:0009636">
    <property type="term" value="P:response to toxic substance"/>
    <property type="evidence" value="ECO:0000270"/>
    <property type="project" value="RGD"/>
</dbReference>
<dbReference type="GO" id="GO:0006805">
    <property type="term" value="P:xenobiotic metabolic process"/>
    <property type="evidence" value="ECO:0000266"/>
    <property type="project" value="RGD"/>
</dbReference>
<dbReference type="CDD" id="cd03210">
    <property type="entry name" value="GST_C_Pi"/>
    <property type="match status" value="1"/>
</dbReference>
<dbReference type="CDD" id="cd03076">
    <property type="entry name" value="GST_N_Pi"/>
    <property type="match status" value="1"/>
</dbReference>
<dbReference type="FunFam" id="1.20.1050.10:FF:000047">
    <property type="entry name" value="Glutathione S-transferase P"/>
    <property type="match status" value="1"/>
</dbReference>
<dbReference type="FunFam" id="3.40.30.10:FF:000071">
    <property type="entry name" value="Glutathione S-transferase P"/>
    <property type="match status" value="1"/>
</dbReference>
<dbReference type="Gene3D" id="1.20.1050.10">
    <property type="match status" value="1"/>
</dbReference>
<dbReference type="Gene3D" id="3.40.30.10">
    <property type="entry name" value="Glutaredoxin"/>
    <property type="match status" value="1"/>
</dbReference>
<dbReference type="InterPro" id="IPR010987">
    <property type="entry name" value="Glutathione-S-Trfase_C-like"/>
</dbReference>
<dbReference type="InterPro" id="IPR036282">
    <property type="entry name" value="Glutathione-S-Trfase_C_sf"/>
</dbReference>
<dbReference type="InterPro" id="IPR004045">
    <property type="entry name" value="Glutathione_S-Trfase_N"/>
</dbReference>
<dbReference type="InterPro" id="IPR004046">
    <property type="entry name" value="GST_C"/>
</dbReference>
<dbReference type="InterPro" id="IPR003082">
    <property type="entry name" value="GST_pi"/>
</dbReference>
<dbReference type="InterPro" id="IPR050213">
    <property type="entry name" value="GST_superfamily"/>
</dbReference>
<dbReference type="InterPro" id="IPR036249">
    <property type="entry name" value="Thioredoxin-like_sf"/>
</dbReference>
<dbReference type="PANTHER" id="PTHR11571">
    <property type="entry name" value="GLUTATHIONE S-TRANSFERASE"/>
    <property type="match status" value="1"/>
</dbReference>
<dbReference type="PANTHER" id="PTHR11571:SF255">
    <property type="entry name" value="GLUTATHIONE S-TRANSFERASE P"/>
    <property type="match status" value="1"/>
</dbReference>
<dbReference type="Pfam" id="PF14497">
    <property type="entry name" value="GST_C_3"/>
    <property type="match status" value="1"/>
</dbReference>
<dbReference type="Pfam" id="PF02798">
    <property type="entry name" value="GST_N"/>
    <property type="match status" value="1"/>
</dbReference>
<dbReference type="PRINTS" id="PR01268">
    <property type="entry name" value="GSTRNSFRASEP"/>
</dbReference>
<dbReference type="SFLD" id="SFLDG01205">
    <property type="entry name" value="AMPS.1"/>
    <property type="match status" value="1"/>
</dbReference>
<dbReference type="SFLD" id="SFLDG00363">
    <property type="entry name" value="AMPS_(cytGST):_Alpha-__Mu-__Pi"/>
    <property type="match status" value="1"/>
</dbReference>
<dbReference type="SUPFAM" id="SSF47616">
    <property type="entry name" value="GST C-terminal domain-like"/>
    <property type="match status" value="1"/>
</dbReference>
<dbReference type="SUPFAM" id="SSF52833">
    <property type="entry name" value="Thioredoxin-like"/>
    <property type="match status" value="1"/>
</dbReference>
<dbReference type="PROSITE" id="PS50405">
    <property type="entry name" value="GST_CTER"/>
    <property type="match status" value="1"/>
</dbReference>
<dbReference type="PROSITE" id="PS50404">
    <property type="entry name" value="GST_NTER"/>
    <property type="match status" value="1"/>
</dbReference>
<organism>
    <name type="scientific">Rattus norvegicus</name>
    <name type="common">Rat</name>
    <dbReference type="NCBI Taxonomy" id="10116"/>
    <lineage>
        <taxon>Eukaryota</taxon>
        <taxon>Metazoa</taxon>
        <taxon>Chordata</taxon>
        <taxon>Craniata</taxon>
        <taxon>Vertebrata</taxon>
        <taxon>Euteleostomi</taxon>
        <taxon>Mammalia</taxon>
        <taxon>Eutheria</taxon>
        <taxon>Euarchontoglires</taxon>
        <taxon>Glires</taxon>
        <taxon>Rodentia</taxon>
        <taxon>Myomorpha</taxon>
        <taxon>Muroidea</taxon>
        <taxon>Muridae</taxon>
        <taxon>Murinae</taxon>
        <taxon>Rattus</taxon>
    </lineage>
</organism>
<protein>
    <recommendedName>
        <fullName evidence="7">Glutathione S-transferase P</fullName>
        <ecNumber evidence="2">2.5.1.18</ecNumber>
    </recommendedName>
    <alternativeName>
        <fullName>Chain 7</fullName>
    </alternativeName>
    <alternativeName>
        <fullName>GST 7-7</fullName>
    </alternativeName>
    <alternativeName>
        <fullName>GST class-pi</fullName>
    </alternativeName>
</protein>
<proteinExistence type="evidence at protein level"/>
<name>GSTP1_RAT</name>
<evidence type="ECO:0000250" key="1"/>
<evidence type="ECO:0000250" key="2">
    <source>
        <dbReference type="UniProtKB" id="P09211"/>
    </source>
</evidence>
<evidence type="ECO:0000250" key="3">
    <source>
        <dbReference type="UniProtKB" id="P19157"/>
    </source>
</evidence>
<evidence type="ECO:0000269" key="4">
    <source>
    </source>
</evidence>
<evidence type="ECO:0000269" key="5">
    <source>
    </source>
</evidence>
<evidence type="ECO:0000269" key="6">
    <source ref="5"/>
</evidence>
<evidence type="ECO:0000305" key="7"/>
<evidence type="ECO:0000312" key="8">
    <source>
        <dbReference type="RGD" id="2758"/>
    </source>
</evidence>
<gene>
    <name evidence="8" type="primary">Gstp1</name>
</gene>
<accession>P04906</accession>
<comment type="function">
    <text evidence="2">Conjugation of reduced glutathione to a wide number of exogenous and endogenous hydrophobic electrophiles. Involved in the formation of glutathione conjugates of both prostaglandin A2 (PGA2) and prostaglandin J2 (PGJ2). Participates in the formation of novel hepoxilin regioisomers. Negatively regulates CDK5 activity via p25/p35 translocation to prevent neurodegeneration.</text>
</comment>
<comment type="catalytic activity">
    <reaction evidence="2">
        <text>RX + glutathione = an S-substituted glutathione + a halide anion + H(+)</text>
        <dbReference type="Rhea" id="RHEA:16437"/>
        <dbReference type="ChEBI" id="CHEBI:15378"/>
        <dbReference type="ChEBI" id="CHEBI:16042"/>
        <dbReference type="ChEBI" id="CHEBI:17792"/>
        <dbReference type="ChEBI" id="CHEBI:57925"/>
        <dbReference type="ChEBI" id="CHEBI:90779"/>
        <dbReference type="EC" id="2.5.1.18"/>
    </reaction>
    <physiologicalReaction direction="left-to-right" evidence="2">
        <dbReference type="Rhea" id="RHEA:16438"/>
    </physiologicalReaction>
</comment>
<comment type="catalytic activity">
    <reaction evidence="2">
        <text>prostaglandin J2 + glutathione = prostaglandin J2-S-(R)-glutathione</text>
        <dbReference type="Rhea" id="RHEA:50804"/>
        <dbReference type="ChEBI" id="CHEBI:57925"/>
        <dbReference type="ChEBI" id="CHEBI:133396"/>
        <dbReference type="ChEBI" id="CHEBI:133771"/>
    </reaction>
    <physiologicalReaction direction="left-to-right" evidence="2">
        <dbReference type="Rhea" id="RHEA:50805"/>
    </physiologicalReaction>
</comment>
<comment type="catalytic activity">
    <reaction evidence="2">
        <text>prostaglandin J2 + glutathione = prostaglandin J2-S-(S)-glutathione</text>
        <dbReference type="Rhea" id="RHEA:50808"/>
        <dbReference type="ChEBI" id="CHEBI:57925"/>
        <dbReference type="ChEBI" id="CHEBI:133396"/>
        <dbReference type="ChEBI" id="CHEBI:133772"/>
    </reaction>
    <physiologicalReaction direction="left-to-right" evidence="2">
        <dbReference type="Rhea" id="RHEA:50809"/>
    </physiologicalReaction>
</comment>
<comment type="catalytic activity">
    <reaction evidence="2">
        <text>prostaglandin A2 + glutathione = prostaglandin A2-S-(S)-glutathione</text>
        <dbReference type="Rhea" id="RHEA:50800"/>
        <dbReference type="ChEBI" id="CHEBI:57925"/>
        <dbReference type="ChEBI" id="CHEBI:133370"/>
        <dbReference type="ChEBI" id="CHEBI:133769"/>
    </reaction>
    <physiologicalReaction direction="left-to-right" evidence="2">
        <dbReference type="Rhea" id="RHEA:50801"/>
    </physiologicalReaction>
</comment>
<comment type="catalytic activity">
    <reaction evidence="2">
        <text>11(S)-hydroxy-14(S),15(S)-epoxy-(5Z,8Z,12E)-eicosatrienoate + glutathione = (11S,15S)-dihydroxy-14(R)-S-glutathionyl-(5Z,8Z,12E)-eicosatrienoate</text>
        <dbReference type="Rhea" id="RHEA:50260"/>
        <dbReference type="ChEBI" id="CHEBI:57925"/>
        <dbReference type="ChEBI" id="CHEBI:132200"/>
        <dbReference type="ChEBI" id="CHEBI:132201"/>
    </reaction>
    <physiologicalReaction direction="left-to-right" evidence="2">
        <dbReference type="Rhea" id="RHEA:50261"/>
    </physiologicalReaction>
</comment>
<comment type="subunit">
    <text evidence="1">Homodimer. Interacts with CDK5 (By similarity).</text>
</comment>
<comment type="subcellular location">
    <subcellularLocation>
        <location evidence="1">Cytoplasm</location>
    </subcellularLocation>
    <subcellularLocation>
        <location evidence="1">Mitochondrion</location>
    </subcellularLocation>
    <subcellularLocation>
        <location evidence="1">Nucleus</location>
    </subcellularLocation>
    <text evidence="1">The 83 N-terminal amino acids function as un uncleaved transit peptide, and arginine residues within it are crucial for mitochondrial localization.</text>
</comment>
<comment type="tissue specificity">
    <text>Present in kidney, lung, testis and placenta, very low levels in liver.</text>
</comment>
<comment type="similarity">
    <text evidence="7">Belongs to the GST superfamily. Pi family.</text>
</comment>
<reference key="1">
    <citation type="journal article" date="1985" name="Nucleic Acids Res.">
        <title>Cloning and the nucleotide sequence of rat glutathione S-transferase P cDNA.</title>
        <authorList>
            <person name="Suguoka Y."/>
            <person name="Kano T."/>
            <person name="Okuda A."/>
            <person name="Sakai M."/>
            <person name="Kitagawa T."/>
            <person name="Muramatsu M."/>
        </authorList>
    </citation>
    <scope>NUCLEOTIDE SEQUENCE [MRNA]</scope>
</reference>
<reference key="2">
    <citation type="journal article" date="1987" name="J. Biol. Chem.">
        <title>The structure of the rat glutathione S-transferase P gene and related pseudogenes.</title>
        <authorList>
            <person name="Okuda A."/>
            <person name="Sakai M."/>
            <person name="Muramatsu M."/>
        </authorList>
    </citation>
    <scope>NUCLEOTIDE SEQUENCE [GENOMIC DNA]</scope>
    <source>
        <strain>Sprague-Dawley</strain>
        <tissue>Liver</tissue>
    </source>
</reference>
<reference key="3">
    <citation type="journal article" date="2004" name="Genome Res.">
        <title>The status, quality, and expansion of the NIH full-length cDNA project: the Mammalian Gene Collection (MGC).</title>
        <authorList>
            <consortium name="The MGC Project Team"/>
        </authorList>
    </citation>
    <scope>NUCLEOTIDE SEQUENCE [LARGE SCALE MRNA]</scope>
    <source>
        <tissue>Pituitary</tissue>
    </source>
</reference>
<reference key="4">
    <citation type="journal article" date="1988" name="Cancer Res.">
        <title>Purification and characterization of P-52 (glutathione S-transferase-P or 7-7) from normal liver and putative preneoplastic liver nodules.</title>
        <authorList>
            <person name="Rushmore T.H."/>
            <person name="Harris L."/>
            <person name="Nagai M."/>
            <person name="Sharma R.N."/>
            <person name="Hayes M.A."/>
            <person name="Cameron R.G."/>
            <person name="Murray R.K."/>
            <person name="Farber E."/>
        </authorList>
    </citation>
    <scope>PROTEIN SEQUENCE OF 2-27</scope>
</reference>
<reference key="5">
    <citation type="submission" date="2009-01" db="UniProtKB">
        <authorList>
            <person name="Lubec G."/>
            <person name="Afjehi-Sadat L."/>
            <person name="Chen W.-Q."/>
        </authorList>
    </citation>
    <scope>PROTEIN SEQUENCE OF 2-12; 56-71; 122-141 AND 192-209</scope>
    <scope>IDENTIFICATION BY MASS SPECTROMETRY</scope>
    <source>
        <strain>Sprague-Dawley</strain>
        <tissue>Hippocampus</tissue>
        <tissue>Spinal cord</tissue>
    </source>
</reference>
<reference key="6">
    <citation type="journal article" date="1985" name="Proc. Natl. Acad. Sci. U.S.A.">
        <title>Identification of three classes of cytosolic glutathione transferase common to several mammalian species: correlation between structural data and enzymatic properties.</title>
        <authorList>
            <person name="Mannervik B."/>
            <person name="Alin P."/>
            <person name="Guthenberg C."/>
            <person name="Jensson H."/>
            <person name="Tahir M.K."/>
            <person name="Warholm M."/>
            <person name="Joernvall H."/>
        </authorList>
    </citation>
    <scope>PROTEIN SEQUENCE OF 2-11</scope>
</reference>
<feature type="initiator methionine" description="Removed" evidence="4 5 6">
    <location>
        <position position="1"/>
    </location>
</feature>
<feature type="chain" id="PRO_0000185907" description="Glutathione S-transferase P">
    <location>
        <begin position="2"/>
        <end position="210"/>
    </location>
</feature>
<feature type="domain" description="GST N-terminal">
    <location>
        <begin position="2"/>
        <end position="81"/>
    </location>
</feature>
<feature type="domain" description="GST C-terminal">
    <location>
        <begin position="83"/>
        <end position="204"/>
    </location>
</feature>
<feature type="binding site" evidence="2">
    <location>
        <position position="8"/>
    </location>
    <ligand>
        <name>glutathione</name>
        <dbReference type="ChEBI" id="CHEBI:57925"/>
    </ligand>
</feature>
<feature type="binding site" evidence="2">
    <location>
        <position position="14"/>
    </location>
    <ligand>
        <name>glutathione</name>
        <dbReference type="ChEBI" id="CHEBI:57925"/>
    </ligand>
</feature>
<feature type="binding site" evidence="2">
    <location>
        <position position="39"/>
    </location>
    <ligand>
        <name>glutathione</name>
        <dbReference type="ChEBI" id="CHEBI:57925"/>
    </ligand>
</feature>
<feature type="binding site" evidence="2">
    <location>
        <position position="45"/>
    </location>
    <ligand>
        <name>glutathione</name>
        <dbReference type="ChEBI" id="CHEBI:57925"/>
    </ligand>
</feature>
<feature type="binding site" evidence="2">
    <location>
        <begin position="52"/>
        <end position="53"/>
    </location>
    <ligand>
        <name>glutathione</name>
        <dbReference type="ChEBI" id="CHEBI:57925"/>
    </ligand>
</feature>
<feature type="binding site" evidence="2">
    <location>
        <begin position="65"/>
        <end position="66"/>
    </location>
    <ligand>
        <name>glutathione</name>
        <dbReference type="ChEBI" id="CHEBI:57925"/>
    </ligand>
</feature>
<feature type="modified residue" description="Phosphotyrosine; by EGFR" evidence="2">
    <location>
        <position position="4"/>
    </location>
</feature>
<feature type="modified residue" description="Phosphothreonine" evidence="2">
    <location>
        <position position="62"/>
    </location>
</feature>
<feature type="modified residue" description="N6-succinyllysine" evidence="3">
    <location>
        <position position="103"/>
    </location>
</feature>
<feature type="modified residue" description="N6-succinyllysine" evidence="3">
    <location>
        <position position="116"/>
    </location>
</feature>
<feature type="modified residue" description="N6-acetyllysine" evidence="2">
    <location>
        <position position="128"/>
    </location>
</feature>
<feature type="sequence conflict" description="In Ref. 4; AA sequence." evidence="7" ref="4">
    <original>C</original>
    <variation>Y</variation>
    <location>
        <position position="15"/>
    </location>
</feature>